<evidence type="ECO:0000250" key="1">
    <source>
        <dbReference type="UniProtKB" id="P53867"/>
    </source>
</evidence>
<evidence type="ECO:0000250" key="2">
    <source>
        <dbReference type="UniProtKB" id="Q9Y4P1"/>
    </source>
</evidence>
<evidence type="ECO:0000256" key="3">
    <source>
        <dbReference type="SAM" id="MobiDB-lite"/>
    </source>
</evidence>
<evidence type="ECO:0000305" key="4"/>
<gene>
    <name type="primary">ATG4</name>
    <name type="ORF">PICST_30446</name>
</gene>
<sequence length="514" mass="57380">MAREDASVPRSHDSADASPNSTAKEIPVPQPPLLNLNLNLNMNSGFNLSNWWHQITSIEADSSDDRNNNNSNNGINAAESDSAQSQPIVVLGHSYQTTEEAHEDIIKKLCLTYRYGFERIPRAVNGPSPLSFMQSVIFSKSLLYNLQNFNNFIEKENFTTDVGWGCMIRTSQSLLANTFVRLLDKQSDIIALFNDTYLAPFSLHNFIRVASSSPLKVKPGEWFGPNAASLSIKRLCDGYYDNSTSETILPRINVLISESTDLYDSQIAQLLEPSTETKGLLVLLPVRLGIDSINSYYFSSLLHLLSLEQSVGIAGGKPSSSFYFFGYQDNSLIYMDPHSAQIFSSDIDMSTYYATRYQRVDIGKLDPSMLIGVFIRDLTSYENFKKSCLDAANKIVHFHATERSTVPESRRKNSEFVNINRSDLKDEDYINIDRVNRLDSTDDFIDLGDDYVETNTNLEEATPSAEDTVPVSTLSASESEITTSSYETPTSKDDNSSRASLDVVVLDTTGEQQE</sequence>
<protein>
    <recommendedName>
        <fullName>Probable cysteine protease ATG4</fullName>
        <ecNumber>3.4.22.-</ecNumber>
    </recommendedName>
    <alternativeName>
        <fullName>Autophagy-related protein 4</fullName>
    </alternativeName>
</protein>
<reference key="1">
    <citation type="journal article" date="2007" name="Nat. Biotechnol.">
        <title>Genome sequence of the lignocellulose-bioconverting and xylose-fermenting yeast Pichia stipitis.</title>
        <authorList>
            <person name="Jeffries T.W."/>
            <person name="Grigoriev I.V."/>
            <person name="Grimwood J."/>
            <person name="Laplaza J.M."/>
            <person name="Aerts A."/>
            <person name="Salamov A."/>
            <person name="Schmutz J."/>
            <person name="Lindquist E."/>
            <person name="Dehal P."/>
            <person name="Shapiro H."/>
            <person name="Jin Y.-S."/>
            <person name="Passoth V."/>
            <person name="Richardson P.M."/>
        </authorList>
    </citation>
    <scope>NUCLEOTIDE SEQUENCE [LARGE SCALE GENOMIC DNA]</scope>
    <source>
        <strain>ATCC 58785 / CBS 6054 / NBRC 10063 / NRRL Y-11545</strain>
    </source>
</reference>
<name>ATG4_PICST</name>
<accession>A3LQU0</accession>
<comment type="function">
    <text evidence="1">Cysteine protease that plays a key role in cytoplasm to vacuole transport (Cvt) and autophagy by mediating both proteolytic activation and delipidation of ATG8. Required for selective autophagic degradation of the nucleus (nucleophagy) as well as for mitophagy which contributes to regulate mitochondrial quantity and quality by eliminating the mitochondria to a basal level to fulfill cellular energy requirements and preventing excess ROS production. The protease activity is required for proteolytic activation of ATG8: cleaves the C-terminal amino acid of ATG8 to reveal a C-terminal glycine. ATG8 ubiquitin-like activity requires the exposure of the glycine at the C-terminus for its conjugation to phosphatidylethanolamine (PE) and its insertion to membranes, which is necessary for autophagy. The ATG8-PE conjugate mediates tethering between adjacent membranes and stimulates membrane hemifusion, leading to expansion of the autophagosomal membrane during autophagy. In addition to the protease activity, also catalyzes deconjugation of PE-conjugated forms of ATG8 during macroautophagy: ATG8 delipidation is required to release the protein from membranes, which facilitates multiple events during macroautophagy, and especially for efficient autophagosome biogenesis, the assembly of ATG9-containing tubulovesicular clusters into phagophores/autophagosomes, and for the disassembly of PAS-associated ATG components. ATG8 delipidation by ATG4 also recycles ATG8-PE generated on inappropriate membranes to maintain a reservoir of unlipidated ATG8 that is required for autophagosome formation at the PAS.</text>
</comment>
<comment type="catalytic activity">
    <reaction evidence="1">
        <text>[protein]-C-terminal L-amino acid-glycyl-phosphatidylethanolamide + H2O = [protein]-C-terminal L-amino acid-glycine + a 1,2-diacyl-sn-glycero-3-phosphoethanolamine</text>
        <dbReference type="Rhea" id="RHEA:67548"/>
        <dbReference type="Rhea" id="RHEA-COMP:17323"/>
        <dbReference type="Rhea" id="RHEA-COMP:17324"/>
        <dbReference type="ChEBI" id="CHEBI:15377"/>
        <dbReference type="ChEBI" id="CHEBI:64612"/>
        <dbReference type="ChEBI" id="CHEBI:172940"/>
        <dbReference type="ChEBI" id="CHEBI:172941"/>
    </reaction>
    <physiologicalReaction direction="left-to-right" evidence="1">
        <dbReference type="Rhea" id="RHEA:67549"/>
    </physiologicalReaction>
</comment>
<comment type="subcellular location">
    <subcellularLocation>
        <location evidence="1">Cytoplasm</location>
    </subcellularLocation>
    <subcellularLocation>
        <location evidence="1">Nucleus</location>
    </subcellularLocation>
    <subcellularLocation>
        <location evidence="1">Preautophagosomal structure</location>
    </subcellularLocation>
</comment>
<comment type="similarity">
    <text evidence="4">Belongs to the peptidase C54 family.</text>
</comment>
<proteinExistence type="inferred from homology"/>
<organism>
    <name type="scientific">Scheffersomyces stipitis (strain ATCC 58785 / CBS 6054 / NBRC 10063 / NRRL Y-11545)</name>
    <name type="common">Yeast</name>
    <name type="synonym">Pichia stipitis</name>
    <dbReference type="NCBI Taxonomy" id="322104"/>
    <lineage>
        <taxon>Eukaryota</taxon>
        <taxon>Fungi</taxon>
        <taxon>Dikarya</taxon>
        <taxon>Ascomycota</taxon>
        <taxon>Saccharomycotina</taxon>
        <taxon>Pichiomycetes</taxon>
        <taxon>Debaryomycetaceae</taxon>
        <taxon>Scheffersomyces</taxon>
    </lineage>
</organism>
<feature type="chain" id="PRO_0000317844" description="Probable cysteine protease ATG4">
    <location>
        <begin position="1"/>
        <end position="514"/>
    </location>
</feature>
<feature type="region of interest" description="Disordered" evidence="3">
    <location>
        <begin position="1"/>
        <end position="28"/>
    </location>
</feature>
<feature type="region of interest" description="Disordered" evidence="3">
    <location>
        <begin position="61"/>
        <end position="84"/>
    </location>
</feature>
<feature type="region of interest" description="Disordered" evidence="3">
    <location>
        <begin position="461"/>
        <end position="514"/>
    </location>
</feature>
<feature type="compositionally biased region" description="Basic and acidic residues" evidence="3">
    <location>
        <begin position="1"/>
        <end position="15"/>
    </location>
</feature>
<feature type="compositionally biased region" description="Low complexity" evidence="3">
    <location>
        <begin position="472"/>
        <end position="489"/>
    </location>
</feature>
<feature type="active site" description="Nucleophile" evidence="2">
    <location>
        <position position="166"/>
    </location>
</feature>
<feature type="active site" evidence="2">
    <location>
        <position position="336"/>
    </location>
</feature>
<feature type="active site" evidence="2">
    <location>
        <position position="338"/>
    </location>
</feature>
<keyword id="KW-0072">Autophagy</keyword>
<keyword id="KW-0963">Cytoplasm</keyword>
<keyword id="KW-0378">Hydrolase</keyword>
<keyword id="KW-0539">Nucleus</keyword>
<keyword id="KW-0645">Protease</keyword>
<keyword id="KW-0653">Protein transport</keyword>
<keyword id="KW-1185">Reference proteome</keyword>
<keyword id="KW-0788">Thiol protease</keyword>
<keyword id="KW-0813">Transport</keyword>
<dbReference type="EC" id="3.4.22.-"/>
<dbReference type="EMBL" id="CP000497">
    <property type="protein sequence ID" value="ABN65267.2"/>
    <property type="molecule type" value="Genomic_DNA"/>
</dbReference>
<dbReference type="RefSeq" id="XP_001383296.2">
    <property type="nucleotide sequence ID" value="XM_001383259.1"/>
</dbReference>
<dbReference type="SMR" id="A3LQU0"/>
<dbReference type="FunCoup" id="A3LQU0">
    <property type="interactions" value="319"/>
</dbReference>
<dbReference type="STRING" id="322104.A3LQU0"/>
<dbReference type="MEROPS" id="C54.001"/>
<dbReference type="GeneID" id="4837900"/>
<dbReference type="KEGG" id="pic:PICST_30446"/>
<dbReference type="eggNOG" id="KOG2674">
    <property type="taxonomic scope" value="Eukaryota"/>
</dbReference>
<dbReference type="HOGENOM" id="CLU_021259_5_2_1"/>
<dbReference type="InParanoid" id="A3LQU0"/>
<dbReference type="OMA" id="FPPFVPY"/>
<dbReference type="OrthoDB" id="2960936at2759"/>
<dbReference type="Proteomes" id="UP000002258">
    <property type="component" value="Chromosome 3"/>
</dbReference>
<dbReference type="GO" id="GO:0005634">
    <property type="term" value="C:nucleus"/>
    <property type="evidence" value="ECO:0007669"/>
    <property type="project" value="UniProtKB-SubCell"/>
</dbReference>
<dbReference type="GO" id="GO:0000407">
    <property type="term" value="C:phagophore assembly site"/>
    <property type="evidence" value="ECO:0007669"/>
    <property type="project" value="UniProtKB-SubCell"/>
</dbReference>
<dbReference type="GO" id="GO:0004197">
    <property type="term" value="F:cysteine-type endopeptidase activity"/>
    <property type="evidence" value="ECO:0007669"/>
    <property type="project" value="TreeGrafter"/>
</dbReference>
<dbReference type="GO" id="GO:0019786">
    <property type="term" value="F:protein-phosphatidylethanolamide deconjugating activity"/>
    <property type="evidence" value="ECO:0007669"/>
    <property type="project" value="InterPro"/>
</dbReference>
<dbReference type="GO" id="GO:0035973">
    <property type="term" value="P:aggrephagy"/>
    <property type="evidence" value="ECO:0007669"/>
    <property type="project" value="TreeGrafter"/>
</dbReference>
<dbReference type="GO" id="GO:0000045">
    <property type="term" value="P:autophagosome assembly"/>
    <property type="evidence" value="ECO:0007669"/>
    <property type="project" value="TreeGrafter"/>
</dbReference>
<dbReference type="GO" id="GO:0000423">
    <property type="term" value="P:mitophagy"/>
    <property type="evidence" value="ECO:0007669"/>
    <property type="project" value="TreeGrafter"/>
</dbReference>
<dbReference type="GO" id="GO:0034727">
    <property type="term" value="P:piecemeal microautophagy of the nucleus"/>
    <property type="evidence" value="ECO:0007669"/>
    <property type="project" value="TreeGrafter"/>
</dbReference>
<dbReference type="GO" id="GO:0016485">
    <property type="term" value="P:protein processing"/>
    <property type="evidence" value="ECO:0007669"/>
    <property type="project" value="TreeGrafter"/>
</dbReference>
<dbReference type="GO" id="GO:0015031">
    <property type="term" value="P:protein transport"/>
    <property type="evidence" value="ECO:0007669"/>
    <property type="project" value="UniProtKB-KW"/>
</dbReference>
<dbReference type="InterPro" id="IPR038765">
    <property type="entry name" value="Papain-like_cys_pep_sf"/>
</dbReference>
<dbReference type="InterPro" id="IPR005078">
    <property type="entry name" value="Peptidase_C54"/>
</dbReference>
<dbReference type="InterPro" id="IPR046792">
    <property type="entry name" value="Peptidase_C54_cat"/>
</dbReference>
<dbReference type="PANTHER" id="PTHR22624:SF49">
    <property type="entry name" value="CYSTEINE PROTEASE"/>
    <property type="match status" value="1"/>
</dbReference>
<dbReference type="PANTHER" id="PTHR22624">
    <property type="entry name" value="CYSTEINE PROTEASE ATG4"/>
    <property type="match status" value="1"/>
</dbReference>
<dbReference type="Pfam" id="PF03416">
    <property type="entry name" value="Peptidase_C54"/>
    <property type="match status" value="1"/>
</dbReference>
<dbReference type="SUPFAM" id="SSF54001">
    <property type="entry name" value="Cysteine proteinases"/>
    <property type="match status" value="1"/>
</dbReference>